<dbReference type="EMBL" id="Z70678">
    <property type="protein sequence ID" value="CAA94561.1"/>
    <property type="molecule type" value="Genomic_DNA"/>
</dbReference>
<dbReference type="EMBL" id="Z74984">
    <property type="protein sequence ID" value="CAA99269.1"/>
    <property type="molecule type" value="Genomic_DNA"/>
</dbReference>
<dbReference type="EMBL" id="BK006948">
    <property type="protein sequence ID" value="DAA10855.1"/>
    <property type="molecule type" value="Genomic_DNA"/>
</dbReference>
<dbReference type="PIR" id="S66959">
    <property type="entry name" value="S66959"/>
</dbReference>
<dbReference type="RefSeq" id="NP_014719.1">
    <property type="nucleotide sequence ID" value="NM_001183495.1"/>
</dbReference>
<dbReference type="PDB" id="4ZKD">
    <property type="method" value="X-ray"/>
    <property type="resolution" value="2.18 A"/>
    <property type="chains" value="A=254-747"/>
</dbReference>
<dbReference type="PDB" id="4ZKE">
    <property type="method" value="X-ray"/>
    <property type="resolution" value="2.25 A"/>
    <property type="chains" value="A=254-747"/>
</dbReference>
<dbReference type="PDB" id="5G06">
    <property type="method" value="EM"/>
    <property type="resolution" value="4.20 A"/>
    <property type="chains" value="P=1-747"/>
</dbReference>
<dbReference type="PDB" id="5JEA">
    <property type="method" value="X-ray"/>
    <property type="resolution" value="2.65 A"/>
    <property type="chains" value="K=116-225"/>
</dbReference>
<dbReference type="PDB" id="8QCA">
    <property type="method" value="EM"/>
    <property type="resolution" value="2.84 A"/>
    <property type="chains" value="E=1-235"/>
</dbReference>
<dbReference type="PDB" id="8QCB">
    <property type="method" value="EM"/>
    <property type="resolution" value="2.80 A"/>
    <property type="chains" value="E=1-235"/>
</dbReference>
<dbReference type="PDB" id="8QCF">
    <property type="method" value="EM"/>
    <property type="resolution" value="2.55 A"/>
    <property type="chains" value="L=1-239"/>
</dbReference>
<dbReference type="PDBsum" id="4ZKD"/>
<dbReference type="PDBsum" id="4ZKE"/>
<dbReference type="PDBsum" id="5G06"/>
<dbReference type="PDBsum" id="5JEA"/>
<dbReference type="PDBsum" id="8QCA"/>
<dbReference type="PDBsum" id="8QCB"/>
<dbReference type="PDBsum" id="8QCF"/>
<dbReference type="EMDB" id="EMD-18326"/>
<dbReference type="EMDB" id="EMD-18328"/>
<dbReference type="EMDB" id="EMD-18329"/>
<dbReference type="SMR" id="Q08491"/>
<dbReference type="BioGRID" id="34475">
    <property type="interactions" value="174"/>
</dbReference>
<dbReference type="DIP" id="DIP-995N"/>
<dbReference type="FunCoup" id="Q08491">
    <property type="interactions" value="197"/>
</dbReference>
<dbReference type="IntAct" id="Q08491">
    <property type="interactions" value="23"/>
</dbReference>
<dbReference type="MINT" id="Q08491"/>
<dbReference type="STRING" id="4932.YOR076C"/>
<dbReference type="iPTMnet" id="Q08491"/>
<dbReference type="PaxDb" id="4932-YOR076C"/>
<dbReference type="PeptideAtlas" id="Q08491"/>
<dbReference type="EnsemblFungi" id="YOR076C_mRNA">
    <property type="protein sequence ID" value="YOR076C"/>
    <property type="gene ID" value="YOR076C"/>
</dbReference>
<dbReference type="GeneID" id="854243"/>
<dbReference type="KEGG" id="sce:YOR076C"/>
<dbReference type="AGR" id="SGD:S000005602"/>
<dbReference type="SGD" id="S000005602">
    <property type="gene designation" value="SKI7"/>
</dbReference>
<dbReference type="VEuPathDB" id="FungiDB:YOR076C"/>
<dbReference type="eggNOG" id="KOG0458">
    <property type="taxonomic scope" value="Eukaryota"/>
</dbReference>
<dbReference type="GeneTree" id="ENSGT00940000169696"/>
<dbReference type="HOGENOM" id="CLU_374747_0_0_1"/>
<dbReference type="InParanoid" id="Q08491"/>
<dbReference type="OMA" id="FETFSHN"/>
<dbReference type="OrthoDB" id="4062552at2759"/>
<dbReference type="BioCyc" id="YEAST:G3O-33613-MONOMER"/>
<dbReference type="BioGRID-ORCS" id="854243">
    <property type="hits" value="0 hits in 10 CRISPR screens"/>
</dbReference>
<dbReference type="EvolutionaryTrace" id="Q08491"/>
<dbReference type="PRO" id="PR:Q08491"/>
<dbReference type="Proteomes" id="UP000002311">
    <property type="component" value="Chromosome XV"/>
</dbReference>
<dbReference type="RNAct" id="Q08491">
    <property type="molecule type" value="protein"/>
</dbReference>
<dbReference type="GO" id="GO:0005737">
    <property type="term" value="C:cytoplasm"/>
    <property type="evidence" value="ECO:0000314"/>
    <property type="project" value="SGD"/>
</dbReference>
<dbReference type="GO" id="GO:0005829">
    <property type="term" value="C:cytosol"/>
    <property type="evidence" value="ECO:0007005"/>
    <property type="project" value="SGD"/>
</dbReference>
<dbReference type="GO" id="GO:0005525">
    <property type="term" value="F:GTP binding"/>
    <property type="evidence" value="ECO:0000314"/>
    <property type="project" value="SGD"/>
</dbReference>
<dbReference type="GO" id="GO:0003924">
    <property type="term" value="F:GTPase activity"/>
    <property type="evidence" value="ECO:0000318"/>
    <property type="project" value="GO_Central"/>
</dbReference>
<dbReference type="GO" id="GO:0044877">
    <property type="term" value="F:protein-containing complex binding"/>
    <property type="evidence" value="ECO:0000314"/>
    <property type="project" value="SGD"/>
</dbReference>
<dbReference type="GO" id="GO:0030674">
    <property type="term" value="F:protein-macromolecule adaptor activity"/>
    <property type="evidence" value="ECO:0000315"/>
    <property type="project" value="SGD"/>
</dbReference>
<dbReference type="GO" id="GO:0070651">
    <property type="term" value="P:nonfunctional rRNA decay"/>
    <property type="evidence" value="ECO:0000315"/>
    <property type="project" value="SGD"/>
</dbReference>
<dbReference type="GO" id="GO:0000956">
    <property type="term" value="P:nuclear-transcribed mRNA catabolic process"/>
    <property type="evidence" value="ECO:0000315"/>
    <property type="project" value="SGD"/>
</dbReference>
<dbReference type="GO" id="GO:0070478">
    <property type="term" value="P:nuclear-transcribed mRNA catabolic process, 3'-5' exonucleolytic nonsense-mediated decay"/>
    <property type="evidence" value="ECO:0000315"/>
    <property type="project" value="SGD"/>
</dbReference>
<dbReference type="GO" id="GO:0070481">
    <property type="term" value="P:nuclear-transcribed mRNA catabolic process, non-stop decay"/>
    <property type="evidence" value="ECO:0000315"/>
    <property type="project" value="SGD"/>
</dbReference>
<dbReference type="GO" id="GO:0030163">
    <property type="term" value="P:protein catabolic process"/>
    <property type="evidence" value="ECO:0000315"/>
    <property type="project" value="SGD"/>
</dbReference>
<dbReference type="GO" id="GO:0006417">
    <property type="term" value="P:regulation of translation"/>
    <property type="evidence" value="ECO:0007669"/>
    <property type="project" value="UniProtKB-KW"/>
</dbReference>
<dbReference type="GO" id="GO:0006412">
    <property type="term" value="P:translation"/>
    <property type="evidence" value="ECO:0000318"/>
    <property type="project" value="GO_Central"/>
</dbReference>
<dbReference type="Gene3D" id="3.40.50.300">
    <property type="entry name" value="P-loop containing nucleotide triphosphate hydrolases"/>
    <property type="match status" value="1"/>
</dbReference>
<dbReference type="InterPro" id="IPR027417">
    <property type="entry name" value="P-loop_NTPase"/>
</dbReference>
<dbReference type="InterPro" id="IPR054119">
    <property type="entry name" value="Ski7_2nd"/>
</dbReference>
<dbReference type="InterPro" id="IPR054118">
    <property type="entry name" value="Ski7_3rd"/>
</dbReference>
<dbReference type="InterPro" id="IPR000795">
    <property type="entry name" value="T_Tr_GTP-bd_dom"/>
</dbReference>
<dbReference type="InterPro" id="IPR050100">
    <property type="entry name" value="TRAFAC_GTPase_members"/>
</dbReference>
<dbReference type="PANTHER" id="PTHR23115">
    <property type="entry name" value="TRANSLATION FACTOR"/>
    <property type="match status" value="1"/>
</dbReference>
<dbReference type="Pfam" id="PF00009">
    <property type="entry name" value="GTP_EFTU"/>
    <property type="match status" value="1"/>
</dbReference>
<dbReference type="Pfam" id="PF21921">
    <property type="entry name" value="Ski7_2nd"/>
    <property type="match status" value="1"/>
</dbReference>
<dbReference type="Pfam" id="PF21920">
    <property type="entry name" value="Ski7_3rd"/>
    <property type="match status" value="1"/>
</dbReference>
<dbReference type="SUPFAM" id="SSF52540">
    <property type="entry name" value="P-loop containing nucleoside triphosphate hydrolases"/>
    <property type="match status" value="1"/>
</dbReference>
<dbReference type="PROSITE" id="PS51722">
    <property type="entry name" value="G_TR_2"/>
    <property type="match status" value="1"/>
</dbReference>
<reference key="1">
    <citation type="journal article" date="1997" name="Yeast">
        <title>The sequence of a 54.7 kb fragment of yeast chromosome XV reveals the presence of two tRNAs and 24 new open reading frames.</title>
        <authorList>
            <person name="Valens M."/>
            <person name="Bohn C."/>
            <person name="Daignan-Fornier B."/>
            <person name="Dang V.-D."/>
            <person name="Bolotin-Fukuhara M."/>
        </authorList>
    </citation>
    <scope>NUCLEOTIDE SEQUENCE [GENOMIC DNA]</scope>
</reference>
<reference key="2">
    <citation type="journal article" date="1997" name="Nature">
        <title>The nucleotide sequence of Saccharomyces cerevisiae chromosome XV.</title>
        <authorList>
            <person name="Dujon B."/>
            <person name="Albermann K."/>
            <person name="Aldea M."/>
            <person name="Alexandraki D."/>
            <person name="Ansorge W."/>
            <person name="Arino J."/>
            <person name="Benes V."/>
            <person name="Bohn C."/>
            <person name="Bolotin-Fukuhara M."/>
            <person name="Bordonne R."/>
            <person name="Boyer J."/>
            <person name="Camasses A."/>
            <person name="Casamayor A."/>
            <person name="Casas C."/>
            <person name="Cheret G."/>
            <person name="Cziepluch C."/>
            <person name="Daignan-Fornier B."/>
            <person name="Dang V.-D."/>
            <person name="de Haan M."/>
            <person name="Delius H."/>
            <person name="Durand P."/>
            <person name="Fairhead C."/>
            <person name="Feldmann H."/>
            <person name="Gaillon L."/>
            <person name="Galisson F."/>
            <person name="Gamo F.-J."/>
            <person name="Gancedo C."/>
            <person name="Goffeau A."/>
            <person name="Goulding S.E."/>
            <person name="Grivell L.A."/>
            <person name="Habbig B."/>
            <person name="Hand N.J."/>
            <person name="Hani J."/>
            <person name="Hattenhorst U."/>
            <person name="Hebling U."/>
            <person name="Hernando Y."/>
            <person name="Herrero E."/>
            <person name="Heumann K."/>
            <person name="Hiesel R."/>
            <person name="Hilger F."/>
            <person name="Hofmann B."/>
            <person name="Hollenberg C.P."/>
            <person name="Hughes B."/>
            <person name="Jauniaux J.-C."/>
            <person name="Kalogeropoulos A."/>
            <person name="Katsoulou C."/>
            <person name="Kordes E."/>
            <person name="Lafuente M.J."/>
            <person name="Landt O."/>
            <person name="Louis E.J."/>
            <person name="Maarse A.C."/>
            <person name="Madania A."/>
            <person name="Mannhaupt G."/>
            <person name="Marck C."/>
            <person name="Martin R.P."/>
            <person name="Mewes H.-W."/>
            <person name="Michaux G."/>
            <person name="Paces V."/>
            <person name="Parle-McDermott A.G."/>
            <person name="Pearson B.M."/>
            <person name="Perrin A."/>
            <person name="Pettersson B."/>
            <person name="Poch O."/>
            <person name="Pohl T.M."/>
            <person name="Poirey R."/>
            <person name="Portetelle D."/>
            <person name="Pujol A."/>
            <person name="Purnelle B."/>
            <person name="Ramezani Rad M."/>
            <person name="Rechmann S."/>
            <person name="Schwager C."/>
            <person name="Schweizer M."/>
            <person name="Sor F."/>
            <person name="Sterky F."/>
            <person name="Tarassov I.A."/>
            <person name="Teodoru C."/>
            <person name="Tettelin H."/>
            <person name="Thierry A."/>
            <person name="Tobiasch E."/>
            <person name="Tzermia M."/>
            <person name="Uhlen M."/>
            <person name="Unseld M."/>
            <person name="Valens M."/>
            <person name="Vandenbol M."/>
            <person name="Vetter I."/>
            <person name="Vlcek C."/>
            <person name="Voet M."/>
            <person name="Volckaert G."/>
            <person name="Voss H."/>
            <person name="Wambutt R."/>
            <person name="Wedler H."/>
            <person name="Wiemann S."/>
            <person name="Winsor B."/>
            <person name="Wolfe K.H."/>
            <person name="Zollner A."/>
            <person name="Zumstein E."/>
            <person name="Kleine K."/>
        </authorList>
    </citation>
    <scope>NUCLEOTIDE SEQUENCE [LARGE SCALE GENOMIC DNA]</scope>
    <source>
        <strain>ATCC 204508 / S288c</strain>
    </source>
</reference>
<reference key="3">
    <citation type="journal article" date="2014" name="G3 (Bethesda)">
        <title>The reference genome sequence of Saccharomyces cerevisiae: Then and now.</title>
        <authorList>
            <person name="Engel S.R."/>
            <person name="Dietrich F.S."/>
            <person name="Fisk D.G."/>
            <person name="Binkley G."/>
            <person name="Balakrishnan R."/>
            <person name="Costanzo M.C."/>
            <person name="Dwight S.S."/>
            <person name="Hitz B.C."/>
            <person name="Karra K."/>
            <person name="Nash R.S."/>
            <person name="Weng S."/>
            <person name="Wong E.D."/>
            <person name="Lloyd P."/>
            <person name="Skrzypek M.S."/>
            <person name="Miyasato S.R."/>
            <person name="Simison M."/>
            <person name="Cherry J.M."/>
        </authorList>
    </citation>
    <scope>GENOME REANNOTATION</scope>
    <source>
        <strain>ATCC 204508 / S288c</strain>
    </source>
</reference>
<reference key="4">
    <citation type="journal article" date="1984" name="Mol. Cell. Biol.">
        <title>Superkiller mutations in Saccharomyces cerevisiae suppress exclusion of M2 double-stranded RNA by L-A-HN and confer cold sensitivity in the presence of M and L-A-HN.</title>
        <authorList>
            <person name="Ridley S.P."/>
            <person name="Sommer S.S."/>
            <person name="Wickner R.B."/>
        </authorList>
    </citation>
    <scope>FUNCTION</scope>
</reference>
<reference key="5">
    <citation type="journal article" date="1999" name="J. Virol.">
        <title>The ski7 antiviral protein is an EF1-alpha homolog that blocks expression of non-Poly(A) mRNA in Saccharomyces cerevisiae.</title>
        <authorList>
            <person name="Benard L."/>
            <person name="Carroll K."/>
            <person name="Valle R.C.P."/>
            <person name="Masison D.C."/>
            <person name="Wickner R.B."/>
        </authorList>
    </citation>
    <scope>FUNCTION</scope>
</reference>
<reference key="6">
    <citation type="journal article" date="2000" name="Mol. Cell. Biol.">
        <title>Function of the ski4p (Csl4p) and Ski7p proteins in 3'-to-5' degradation of mRNA.</title>
        <authorList>
            <person name="van Hoof A."/>
            <person name="Staples R.R."/>
            <person name="Baker R.E."/>
            <person name="Parker R."/>
        </authorList>
    </citation>
    <scope>FUNCTION</scope>
</reference>
<reference key="7">
    <citation type="journal article" date="2001" name="EMBO J.">
        <title>Ski7p G protein interacts with the exosome and the Ski complex for 3'-to-5' mRNA decay in yeast.</title>
        <authorList>
            <person name="Araki Y."/>
            <person name="Takahashi S."/>
            <person name="Kobayashi T."/>
            <person name="Kajiho H."/>
            <person name="Hoshino S."/>
            <person name="Katada T."/>
        </authorList>
    </citation>
    <scope>FUNCTION</scope>
    <scope>SUBCELLULAR LOCATION</scope>
    <scope>DOMAIN</scope>
    <scope>INTERACTION WITH THE EXOSOME AND SKI COMPLEXES</scope>
</reference>
<reference key="8">
    <citation type="journal article" date="2001" name="Genetics">
        <title>The yeast cytoplasmic LsmI/Pat1p complex protects mRNA 3' termini from partial degradation.</title>
        <authorList>
            <person name="He W."/>
            <person name="Parker R."/>
        </authorList>
    </citation>
    <scope>FUNCTION</scope>
</reference>
<reference key="9">
    <citation type="journal article" date="2002" name="Science">
        <title>Exosome-mediated recognition and degradation of mRNAs lacking a termination codon.</title>
        <authorList>
            <person name="van Hoof A."/>
            <person name="Frischmeyer P.A."/>
            <person name="Dietz H.C."/>
            <person name="Parker R."/>
        </authorList>
    </citation>
    <scope>FUNCTION</scope>
    <scope>INTERACTION WITH THE EXOSOME COMPLEX</scope>
</reference>
<reference key="10">
    <citation type="journal article" date="2003" name="EMBO J.">
        <title>Interaction between Ski7p and Upf1p is required for nonsense-mediated 3'-to-5' mRNA decay in yeast.</title>
        <authorList>
            <person name="Takahashi S."/>
            <person name="Araki Y."/>
            <person name="Sakuno T."/>
            <person name="Katada T."/>
        </authorList>
    </citation>
    <scope>FUNCTION</scope>
    <scope>INTERACTION WITH NAM7</scope>
</reference>
<reference key="11">
    <citation type="journal article" date="2003" name="Mol. Cell">
        <title>An NMD pathway in yeast involving accelerated deadenylation and exosome-mediated 3'--&gt;5' degradation.</title>
        <authorList>
            <person name="Mitchell P."/>
            <person name="Tollervey D."/>
        </authorList>
    </citation>
    <scope>FUNCTION</scope>
</reference>
<reference key="12">
    <citation type="journal article" date="2003" name="Nature">
        <title>Global analysis of protein expression in yeast.</title>
        <authorList>
            <person name="Ghaemmaghami S."/>
            <person name="Huh W.-K."/>
            <person name="Bower K."/>
            <person name="Howson R.W."/>
            <person name="Belle A."/>
            <person name="Dephoure N."/>
            <person name="O'Shea E.K."/>
            <person name="Weissman J.S."/>
        </authorList>
    </citation>
    <scope>LEVEL OF PROTEIN EXPRESSION [LARGE SCALE ANALYSIS]</scope>
</reference>
<reference key="13">
    <citation type="journal article" date="2003" name="Proc. Natl. Acad. Sci. U.S.A.">
        <title>Systematic, genome-wide identification of host genes affecting replication of a positive-strand RNA virus.</title>
        <authorList>
            <person name="Kushner D.B."/>
            <person name="Lindenbach B.D."/>
            <person name="Grdzelishvili V.Z."/>
            <person name="Noueiry A.O."/>
            <person name="Paul S.M."/>
            <person name="Ahlquist P."/>
        </authorList>
    </citation>
    <scope>FUNCTION</scope>
</reference>
<reference key="14">
    <citation type="journal article" date="2003" name="Science">
        <title>Decapping and decay of messenger RNA occur in cytoplasmic processing bodies.</title>
        <authorList>
            <person name="Sheth U."/>
            <person name="Parker R."/>
        </authorList>
    </citation>
    <scope>SUBCELLULAR LOCATION</scope>
</reference>
<reference key="15">
    <citation type="journal article" date="2005" name="EMBO J.">
        <title>Translation of aberrant mRNAs lacking a termination codon or with a shortened 3'-UTR is repressed after initiation in yeast.</title>
        <authorList>
            <person name="Inada T."/>
            <person name="Aiba H."/>
        </authorList>
    </citation>
    <scope>FUNCTION</scope>
</reference>
<reference key="16">
    <citation type="journal article" date="2005" name="RNA">
        <title>Domain interactions within the Ski2/3/8 complex and between the Ski complex and Ski7p.</title>
        <authorList>
            <person name="Wang L."/>
            <person name="Lewis M.S."/>
            <person name="Johnson A.W."/>
        </authorList>
    </citation>
    <scope>INTERACTION WITH SKI3 AND SKI8</scope>
</reference>
<reference key="17">
    <citation type="journal article" date="2007" name="Nat. Struct. Mol. Biol.">
        <title>A single subunit, Dis3, is essentially responsible for yeast exosome core activity.</title>
        <authorList>
            <person name="Dziembowski A."/>
            <person name="Lorentzen E."/>
            <person name="Conti E."/>
            <person name="Seraphin B."/>
        </authorList>
    </citation>
    <scope>IDENTIFICATION BY MASS SPECTROMETRY</scope>
    <scope>INTERACTION WITH THE EXOSOME</scope>
</reference>
<reference key="18">
    <citation type="journal article" date="2007" name="Proc. Natl. Acad. Sci. U.S.A.">
        <title>Analysis of phosphorylation sites on proteins from Saccharomyces cerevisiae by electron transfer dissociation (ETD) mass spectrometry.</title>
        <authorList>
            <person name="Chi A."/>
            <person name="Huttenhower C."/>
            <person name="Geer L.Y."/>
            <person name="Coon J.J."/>
            <person name="Syka J.E.P."/>
            <person name="Bai D.L."/>
            <person name="Shabanowitz J."/>
            <person name="Burke D.J."/>
            <person name="Troyanskaya O.G."/>
            <person name="Hunt D.F."/>
        </authorList>
    </citation>
    <scope>PHOSPHORYLATION [LARGE SCALE ANALYSIS] AT SER-88 AND SER-90</scope>
    <scope>IDENTIFICATION BY MASS SPECTROMETRY [LARGE SCALE ANALYSIS]</scope>
</reference>
<protein>
    <recommendedName>
        <fullName>Superkiller protein 7</fullName>
    </recommendedName>
</protein>
<organism>
    <name type="scientific">Saccharomyces cerevisiae (strain ATCC 204508 / S288c)</name>
    <name type="common">Baker's yeast</name>
    <dbReference type="NCBI Taxonomy" id="559292"/>
    <lineage>
        <taxon>Eukaryota</taxon>
        <taxon>Fungi</taxon>
        <taxon>Dikarya</taxon>
        <taxon>Ascomycota</taxon>
        <taxon>Saccharomycotina</taxon>
        <taxon>Saccharomycetes</taxon>
        <taxon>Saccharomycetales</taxon>
        <taxon>Saccharomycetaceae</taxon>
        <taxon>Saccharomyces</taxon>
    </lineage>
</organism>
<name>SKI7_YEAST</name>
<evidence type="ECO:0000250" key="1"/>
<evidence type="ECO:0000255" key="2">
    <source>
        <dbReference type="PROSITE-ProRule" id="PRU01059"/>
    </source>
</evidence>
<evidence type="ECO:0000256" key="3">
    <source>
        <dbReference type="SAM" id="MobiDB-lite"/>
    </source>
</evidence>
<evidence type="ECO:0000269" key="4">
    <source>
    </source>
</evidence>
<evidence type="ECO:0000269" key="5">
    <source>
    </source>
</evidence>
<evidence type="ECO:0000269" key="6">
    <source>
    </source>
</evidence>
<evidence type="ECO:0000269" key="7">
    <source>
    </source>
</evidence>
<evidence type="ECO:0000269" key="8">
    <source>
    </source>
</evidence>
<evidence type="ECO:0000269" key="9">
    <source>
    </source>
</evidence>
<evidence type="ECO:0000269" key="10">
    <source>
    </source>
</evidence>
<evidence type="ECO:0000269" key="11">
    <source>
    </source>
</evidence>
<evidence type="ECO:0000269" key="12">
    <source>
    </source>
</evidence>
<evidence type="ECO:0000269" key="13">
    <source>
    </source>
</evidence>
<evidence type="ECO:0000269" key="14">
    <source>
    </source>
</evidence>
<evidence type="ECO:0000269" key="15">
    <source>
    </source>
</evidence>
<evidence type="ECO:0000269" key="16">
    <source>
    </source>
</evidence>
<evidence type="ECO:0000269" key="17">
    <source>
    </source>
</evidence>
<evidence type="ECO:0007744" key="18">
    <source>
    </source>
</evidence>
<evidence type="ECO:0007829" key="19">
    <source>
        <dbReference type="PDB" id="4ZKD"/>
    </source>
</evidence>
<evidence type="ECO:0007829" key="20">
    <source>
        <dbReference type="PDB" id="4ZKE"/>
    </source>
</evidence>
<evidence type="ECO:0007829" key="21">
    <source>
        <dbReference type="PDB" id="5JEA"/>
    </source>
</evidence>
<evidence type="ECO:0007829" key="22">
    <source>
        <dbReference type="PDB" id="8QCB"/>
    </source>
</evidence>
<comment type="function">
    <text evidence="4 5 6 7 8 10 11 13 14 17">Represses the expression of non-poly(A) mRNAs like L-A or M viruses and is therefore involved in antiviral system. Mediates interactions via its N-terminus between the exosome and the SKI complex which operate in the 3'-to-5' mRNA-decay pathway. By interacting with NAM7, is also required for nonsense-mediated 3'-to-5' mRNA-decay (NMD). May recognize a stalled 80S ribosome at the 3'-end of a nonstop mRNA which leads to the recruitment of the exosome and SKI complexes to the mRNAs to be degraded.</text>
</comment>
<comment type="subunit">
    <text evidence="7 8 11 15 16">Interacts with the exosome and with the SKI complex composed of at least SKI2, SKI3 and SKI8. Interacts directly with SKI3 and SKI8.</text>
</comment>
<comment type="interaction">
    <interactant intactId="EBI-1389">
        <id>Q08491</id>
    </interactant>
    <interactant intactId="EBI-1731">
        <id>P53859</id>
        <label>CSL4</label>
    </interactant>
    <organismsDiffer>false</organismsDiffer>
    <experiments>5</experiments>
</comment>
<comment type="interaction">
    <interactant intactId="EBI-1389">
        <id>Q08491</id>
    </interactant>
    <interactant intactId="EBI-1861">
        <id>P17883</id>
        <label>SKI3</label>
    </interactant>
    <organismsDiffer>false</organismsDiffer>
    <experiments>3</experiments>
</comment>
<comment type="interaction">
    <interactant intactId="EBI-1389">
        <id>Q08491</id>
    </interactant>
    <interactant intactId="EBI-17260">
        <id>Q02793</id>
        <label>SKI8</label>
    </interactant>
    <organismsDiffer>false</organismsDiffer>
    <experiments>3</experiments>
</comment>
<comment type="interaction">
    <interactant intactId="EBI-1389">
        <id>Q08491</id>
    </interactant>
    <interactant intactId="EBI-373471">
        <id>Q92900</id>
        <label>UPF1</label>
    </interactant>
    <organismsDiffer>true</organismsDiffer>
    <experiments>2</experiments>
</comment>
<comment type="subcellular location">
    <subcellularLocation>
        <location evidence="7 9">Cytoplasm</location>
    </subcellularLocation>
</comment>
<comment type="domain">
    <text evidence="7">The N-terminal domain (residues 1 to 264) is required and sufficient for interaction with the exosome and SKI complexes and for 3'-to-5' mRNA degradation.</text>
</comment>
<comment type="miscellaneous">
    <text evidence="12">Present with 233 molecules/cell in log phase SD medium.</text>
</comment>
<comment type="similarity">
    <text evidence="2">Belongs to the TRAFAC class translation factor GTPase superfamily. Classic translation factor GTPase family.</text>
</comment>
<accession>Q08491</accession>
<accession>D6W2D9</accession>
<accession>O00032</accession>
<proteinExistence type="evidence at protein level"/>
<keyword id="KW-0002">3D-structure</keyword>
<keyword id="KW-0963">Cytoplasm</keyword>
<keyword id="KW-0342">GTP-binding</keyword>
<keyword id="KW-0866">Nonsense-mediated mRNA decay</keyword>
<keyword id="KW-0547">Nucleotide-binding</keyword>
<keyword id="KW-0597">Phosphoprotein</keyword>
<keyword id="KW-0648">Protein biosynthesis</keyword>
<keyword id="KW-1185">Reference proteome</keyword>
<keyword id="KW-0678">Repressor</keyword>
<keyword id="KW-0810">Translation regulation</keyword>
<gene>
    <name type="primary">SKI7</name>
    <name type="ordered locus">YOR076C</name>
    <name type="ORF">YOR29-27</name>
</gene>
<sequence length="747" mass="84779">MSLLEQLARKRIEKSKGLLSADQSHSTSKSASLLERLHKNRETKDNNAETKRKDLKTLLAKDKVKRSDFTPNQHSVSLSLKLSALKKSNSDLEKQGKSVTLDSKENELPTKRKSPDDKLNLEESWKAIKEMNHYCFLKNDPCINQTDDFAFTNFIIKDKKNSLSTSIPLSSQNSSFLSLKKHNNELLGIFVPCNLPKTTRKVAIENFNRPSPDDIIQSAQLNAFNEKLENLNIKSVPKAEKKEPINLQTPPTESIDIHSFIATHPLNLTCLFLGDTNAGKSTLLGHLLYDLNEISMSSMRELQKKSSNLDPSSSNSFKVILDNTKTERENGFSMFKKVIQVENDLLPPSSTLTLIDTPGSIKYFNKETLNSILTFDPEVYVLVIDCNYDSWEKSLDGPNNQIYEILKVISYLNKNSACKKHLIILLNKADLISWDKHRLEMIQSELNYVLKENFQWTDAEFQFIPCSGLLGSNLNKTENITKSKYKSEFDSINYVPEWYEGPTFFSQLYLLVEHNMNKIETTLEEPFVGTILQSSVLQPIAEINYVSLKVLINSGYIQSGQTIEIHTQYEDFHYYGIVSRMKNSKQILETNTKNNISVGLNPDILEVLVKIHNTEDFTKKQFHIRKGDIIIHSRKTNTLSPNLPNTLKLLALRLIKLSIQTHALSDPVDLGSELLLYHNLTHNAVKLVKILGTNDISINPNQSLIVEVEIIEPDFALNVIDSKYITNNIVLTSIDHKVIAVGRIACQ</sequence>
<feature type="chain" id="PRO_0000269648" description="Superkiller protein 7">
    <location>
        <begin position="1"/>
        <end position="747"/>
    </location>
</feature>
<feature type="domain" description="tr-type G" evidence="2">
    <location>
        <begin position="265"/>
        <end position="503"/>
    </location>
</feature>
<feature type="region of interest" description="Disordered" evidence="3">
    <location>
        <begin position="14"/>
        <end position="51"/>
    </location>
</feature>
<feature type="region of interest" description="Disordered" evidence="3">
    <location>
        <begin position="89"/>
        <end position="117"/>
    </location>
</feature>
<feature type="region of interest" description="G1" evidence="2">
    <location>
        <begin position="274"/>
        <end position="281"/>
    </location>
</feature>
<feature type="region of interest" description="G2" evidence="2">
    <location>
        <begin position="331"/>
        <end position="335"/>
    </location>
</feature>
<feature type="region of interest" description="G3" evidence="2">
    <location>
        <begin position="356"/>
        <end position="359"/>
    </location>
</feature>
<feature type="region of interest" description="G4" evidence="2">
    <location>
        <begin position="427"/>
        <end position="430"/>
    </location>
</feature>
<feature type="region of interest" description="G5" evidence="2">
    <location>
        <begin position="467"/>
        <end position="469"/>
    </location>
</feature>
<feature type="compositionally biased region" description="Polar residues" evidence="3">
    <location>
        <begin position="21"/>
        <end position="31"/>
    </location>
</feature>
<feature type="compositionally biased region" description="Basic and acidic residues" evidence="3">
    <location>
        <begin position="35"/>
        <end position="51"/>
    </location>
</feature>
<feature type="binding site" evidence="1">
    <location>
        <begin position="274"/>
        <end position="281"/>
    </location>
    <ligand>
        <name>GTP</name>
        <dbReference type="ChEBI" id="CHEBI:37565"/>
    </ligand>
</feature>
<feature type="binding site" evidence="1">
    <location>
        <begin position="356"/>
        <end position="360"/>
    </location>
    <ligand>
        <name>GTP</name>
        <dbReference type="ChEBI" id="CHEBI:37565"/>
    </ligand>
</feature>
<feature type="binding site" evidence="1">
    <location>
        <begin position="427"/>
        <end position="430"/>
    </location>
    <ligand>
        <name>GTP</name>
        <dbReference type="ChEBI" id="CHEBI:37565"/>
    </ligand>
</feature>
<feature type="modified residue" description="Phosphoserine" evidence="18">
    <location>
        <position position="88"/>
    </location>
</feature>
<feature type="modified residue" description="Phosphoserine" evidence="18">
    <location>
        <position position="90"/>
    </location>
</feature>
<feature type="helix" evidence="22">
    <location>
        <begin position="3"/>
        <end position="11"/>
    </location>
</feature>
<feature type="helix" evidence="22">
    <location>
        <begin position="29"/>
        <end position="32"/>
    </location>
</feature>
<feature type="helix" evidence="22">
    <location>
        <begin position="77"/>
        <end position="85"/>
    </location>
</feature>
<feature type="helix" evidence="21">
    <location>
        <begin position="121"/>
        <end position="131"/>
    </location>
</feature>
<feature type="helix" evidence="21">
    <location>
        <begin position="150"/>
        <end position="155"/>
    </location>
</feature>
<feature type="strand" evidence="21">
    <location>
        <begin position="185"/>
        <end position="189"/>
    </location>
</feature>
<feature type="helix" evidence="21">
    <location>
        <begin position="197"/>
        <end position="208"/>
    </location>
</feature>
<feature type="helix" evidence="21">
    <location>
        <begin position="212"/>
        <end position="225"/>
    </location>
</feature>
<feature type="helix" evidence="19">
    <location>
        <begin position="258"/>
        <end position="262"/>
    </location>
</feature>
<feature type="strand" evidence="19">
    <location>
        <begin position="266"/>
        <end position="273"/>
    </location>
</feature>
<feature type="helix" evidence="19">
    <location>
        <begin position="280"/>
        <end position="290"/>
    </location>
</feature>
<feature type="helix" evidence="19">
    <location>
        <begin position="296"/>
        <end position="305"/>
    </location>
</feature>
<feature type="helix" evidence="19">
    <location>
        <begin position="306"/>
        <end position="309"/>
    </location>
</feature>
<feature type="turn" evidence="20">
    <location>
        <begin position="311"/>
        <end position="313"/>
    </location>
</feature>
<feature type="helix" evidence="19">
    <location>
        <begin position="318"/>
        <end position="321"/>
    </location>
</feature>
<feature type="helix" evidence="19">
    <location>
        <begin position="325"/>
        <end position="330"/>
    </location>
</feature>
<feature type="strand" evidence="19">
    <location>
        <begin position="337"/>
        <end position="341"/>
    </location>
</feature>
<feature type="strand" evidence="19">
    <location>
        <begin position="350"/>
        <end position="356"/>
    </location>
</feature>
<feature type="helix" evidence="19">
    <location>
        <begin position="361"/>
        <end position="364"/>
    </location>
</feature>
<feature type="turn" evidence="19">
    <location>
        <begin position="365"/>
        <end position="367"/>
    </location>
</feature>
<feature type="helix" evidence="19">
    <location>
        <begin position="368"/>
        <end position="375"/>
    </location>
</feature>
<feature type="strand" evidence="19">
    <location>
        <begin position="378"/>
        <end position="385"/>
    </location>
</feature>
<feature type="helix" evidence="19">
    <location>
        <begin position="390"/>
        <end position="393"/>
    </location>
</feature>
<feature type="helix" evidence="19">
    <location>
        <begin position="401"/>
        <end position="409"/>
    </location>
</feature>
<feature type="turn" evidence="19">
    <location>
        <begin position="410"/>
        <end position="415"/>
    </location>
</feature>
<feature type="strand" evidence="19">
    <location>
        <begin position="422"/>
        <end position="427"/>
    </location>
</feature>
<feature type="helix" evidence="19">
    <location>
        <begin position="429"/>
        <end position="432"/>
    </location>
</feature>
<feature type="helix" evidence="19">
    <location>
        <begin position="436"/>
        <end position="452"/>
    </location>
</feature>
<feature type="helix" evidence="19">
    <location>
        <begin position="458"/>
        <end position="460"/>
    </location>
</feature>
<feature type="strand" evidence="19">
    <location>
        <begin position="461"/>
        <end position="465"/>
    </location>
</feature>
<feature type="turn" evidence="19">
    <location>
        <begin position="468"/>
        <end position="471"/>
    </location>
</feature>
<feature type="helix" evidence="19">
    <location>
        <begin position="504"/>
        <end position="515"/>
    </location>
</feature>
<feature type="turn" evidence="19">
    <location>
        <begin position="522"/>
        <end position="524"/>
    </location>
</feature>
<feature type="strand" evidence="19">
    <location>
        <begin position="528"/>
        <end position="536"/>
    </location>
</feature>
<feature type="strand" evidence="19">
    <location>
        <begin position="542"/>
        <end position="558"/>
    </location>
</feature>
<feature type="strand" evidence="19">
    <location>
        <begin position="562"/>
        <end position="566"/>
    </location>
</feature>
<feature type="strand" evidence="19">
    <location>
        <begin position="568"/>
        <end position="571"/>
    </location>
</feature>
<feature type="strand" evidence="19">
    <location>
        <begin position="573"/>
        <end position="583"/>
    </location>
</feature>
<feature type="strand" evidence="19">
    <location>
        <begin position="593"/>
        <end position="595"/>
    </location>
</feature>
<feature type="strand" evidence="19">
    <location>
        <begin position="597"/>
        <end position="600"/>
    </location>
</feature>
<feature type="strand" evidence="19">
    <location>
        <begin position="604"/>
        <end position="612"/>
    </location>
</feature>
<feature type="turn" evidence="19">
    <location>
        <begin position="617"/>
        <end position="619"/>
    </location>
</feature>
<feature type="strand" evidence="19">
    <location>
        <begin position="629"/>
        <end position="632"/>
    </location>
</feature>
<feature type="strand" evidence="19">
    <location>
        <begin position="648"/>
        <end position="660"/>
    </location>
</feature>
<feature type="strand" evidence="19">
    <location>
        <begin position="673"/>
        <end position="678"/>
    </location>
</feature>
<feature type="strand" evidence="19">
    <location>
        <begin position="681"/>
        <end position="691"/>
    </location>
</feature>
<feature type="strand" evidence="19">
    <location>
        <begin position="696"/>
        <end position="698"/>
    </location>
</feature>
<feature type="strand" evidence="19">
    <location>
        <begin position="703"/>
        <end position="710"/>
    </location>
</feature>
<feature type="strand" evidence="19">
    <location>
        <begin position="717"/>
        <end position="722"/>
    </location>
</feature>
<feature type="strand" evidence="19">
    <location>
        <begin position="728"/>
        <end position="732"/>
    </location>
</feature>
<feature type="strand" evidence="19">
    <location>
        <begin position="738"/>
        <end position="744"/>
    </location>
</feature>